<sequence>MQPDLTPNPAPPLIALTGIGKRFPGVQALDDCHFDLRAGEVHALMGENGAGKSTLMKILAGVYQRDDGEIRMDGRAVEIADPRAAQALGIGIIHQELNLMNHLSVAQNIFIGREPRGRFGVFVDEAALNRDAAAIFARMRLDLDPRTPVGQLTVAKQQMVEIAKALSFDSRVLIMDEPTAALNNAEIAELFRIIGDLRAHGVGIVYISHKMDELRQIADRVTVMRDGKYVATVPMADTSMDAIIAMMVGRQLATEFRTPPDTSANDVALEVRGLSRGRAIRDVGFTLRRGEILGFAGLMGAGRTEVARAVFGADPVDAGEIRVHGKTVSIRSPADAVRHGIGYLSEDRKHFGLAVGMDVQNNIALSSMRRFVRRGLFLDARALRDTAQSYVRQLAIRTPSVTQPARLLSGGNQQKIVIAKWLLRDCDILFFDEPTRGIDVGAKSEIYKLLDALAADGKAIVMISSELPEVLRMSHRILVMCEGRVTGELRAADATQEKIMQLATQRESTVLS</sequence>
<dbReference type="EC" id="7.5.2.11" evidence="1"/>
<dbReference type="EC" id="7.5.2.7" evidence="1"/>
<dbReference type="EMBL" id="CP000152">
    <property type="protein sequence ID" value="ABB10738.1"/>
    <property type="molecule type" value="Genomic_DNA"/>
</dbReference>
<dbReference type="RefSeq" id="WP_011354232.1">
    <property type="nucleotide sequence ID" value="NC_007511.1"/>
</dbReference>
<dbReference type="SMR" id="Q399X3"/>
<dbReference type="GeneID" id="45096997"/>
<dbReference type="KEGG" id="bur:Bcep18194_B0624"/>
<dbReference type="PATRIC" id="fig|482957.22.peg.4235"/>
<dbReference type="HOGENOM" id="CLU_000604_92_3_4"/>
<dbReference type="Proteomes" id="UP000002705">
    <property type="component" value="Chromosome 2"/>
</dbReference>
<dbReference type="GO" id="GO:0005886">
    <property type="term" value="C:plasma membrane"/>
    <property type="evidence" value="ECO:0007669"/>
    <property type="project" value="UniProtKB-SubCell"/>
</dbReference>
<dbReference type="GO" id="GO:0015611">
    <property type="term" value="F:ABC-type D-ribose transporter activity"/>
    <property type="evidence" value="ECO:0007669"/>
    <property type="project" value="UniProtKB-EC"/>
</dbReference>
<dbReference type="GO" id="GO:0005524">
    <property type="term" value="F:ATP binding"/>
    <property type="evidence" value="ECO:0007669"/>
    <property type="project" value="UniProtKB-KW"/>
</dbReference>
<dbReference type="GO" id="GO:0016887">
    <property type="term" value="F:ATP hydrolysis activity"/>
    <property type="evidence" value="ECO:0007669"/>
    <property type="project" value="InterPro"/>
</dbReference>
<dbReference type="CDD" id="cd03216">
    <property type="entry name" value="ABC_Carb_Monos_I"/>
    <property type="match status" value="1"/>
</dbReference>
<dbReference type="CDD" id="cd03215">
    <property type="entry name" value="ABC_Carb_Monos_II"/>
    <property type="match status" value="1"/>
</dbReference>
<dbReference type="FunFam" id="3.40.50.300:FF:000126">
    <property type="entry name" value="Galactose/methyl galactoside import ATP-binding protein MglA"/>
    <property type="match status" value="1"/>
</dbReference>
<dbReference type="FunFam" id="3.40.50.300:FF:000127">
    <property type="entry name" value="Ribose import ATP-binding protein RbsA"/>
    <property type="match status" value="1"/>
</dbReference>
<dbReference type="Gene3D" id="3.40.50.300">
    <property type="entry name" value="P-loop containing nucleotide triphosphate hydrolases"/>
    <property type="match status" value="2"/>
</dbReference>
<dbReference type="InterPro" id="IPR003593">
    <property type="entry name" value="AAA+_ATPase"/>
</dbReference>
<dbReference type="InterPro" id="IPR050107">
    <property type="entry name" value="ABC_carbohydrate_import_ATPase"/>
</dbReference>
<dbReference type="InterPro" id="IPR003439">
    <property type="entry name" value="ABC_transporter-like_ATP-bd"/>
</dbReference>
<dbReference type="InterPro" id="IPR017871">
    <property type="entry name" value="ABC_transporter-like_CS"/>
</dbReference>
<dbReference type="InterPro" id="IPR027417">
    <property type="entry name" value="P-loop_NTPase"/>
</dbReference>
<dbReference type="PANTHER" id="PTHR43790">
    <property type="entry name" value="CARBOHYDRATE TRANSPORT ATP-BINDING PROTEIN MG119-RELATED"/>
    <property type="match status" value="1"/>
</dbReference>
<dbReference type="PANTHER" id="PTHR43790:SF3">
    <property type="entry name" value="D-ALLOSE IMPORT ATP-BINDING PROTEIN ALSA-RELATED"/>
    <property type="match status" value="1"/>
</dbReference>
<dbReference type="Pfam" id="PF00005">
    <property type="entry name" value="ABC_tran"/>
    <property type="match status" value="2"/>
</dbReference>
<dbReference type="SMART" id="SM00382">
    <property type="entry name" value="AAA"/>
    <property type="match status" value="2"/>
</dbReference>
<dbReference type="SUPFAM" id="SSF52540">
    <property type="entry name" value="P-loop containing nucleoside triphosphate hydrolases"/>
    <property type="match status" value="2"/>
</dbReference>
<dbReference type="PROSITE" id="PS00211">
    <property type="entry name" value="ABC_TRANSPORTER_1"/>
    <property type="match status" value="1"/>
</dbReference>
<dbReference type="PROSITE" id="PS50893">
    <property type="entry name" value="ABC_TRANSPORTER_2"/>
    <property type="match status" value="2"/>
</dbReference>
<dbReference type="PROSITE" id="PS51260">
    <property type="entry name" value="MGLA"/>
    <property type="match status" value="1"/>
</dbReference>
<dbReference type="PROSITE" id="PS51254">
    <property type="entry name" value="RBSA"/>
    <property type="match status" value="1"/>
</dbReference>
<evidence type="ECO:0000255" key="1">
    <source>
        <dbReference type="HAMAP-Rule" id="MF_01717"/>
    </source>
</evidence>
<organism>
    <name type="scientific">Burkholderia lata (strain ATCC 17760 / DSM 23089 / LMG 22485 / NCIMB 9086 / R18194 / 383)</name>
    <dbReference type="NCBI Taxonomy" id="482957"/>
    <lineage>
        <taxon>Bacteria</taxon>
        <taxon>Pseudomonadati</taxon>
        <taxon>Pseudomonadota</taxon>
        <taxon>Betaproteobacteria</taxon>
        <taxon>Burkholderiales</taxon>
        <taxon>Burkholderiaceae</taxon>
        <taxon>Burkholderia</taxon>
        <taxon>Burkholderia cepacia complex</taxon>
    </lineage>
</organism>
<feature type="chain" id="PRO_0000262977" description="Putative ribose/galactose/methyl galactoside import ATP-binding protein 1">
    <location>
        <begin position="1"/>
        <end position="512"/>
    </location>
</feature>
<feature type="domain" description="ABC transporter 1" evidence="1">
    <location>
        <begin position="14"/>
        <end position="251"/>
    </location>
</feature>
<feature type="domain" description="ABC transporter 2" evidence="1">
    <location>
        <begin position="262"/>
        <end position="507"/>
    </location>
</feature>
<feature type="binding site" evidence="1">
    <location>
        <begin position="46"/>
        <end position="53"/>
    </location>
    <ligand>
        <name>ATP</name>
        <dbReference type="ChEBI" id="CHEBI:30616"/>
    </ligand>
</feature>
<reference key="1">
    <citation type="submission" date="2005-10" db="EMBL/GenBank/DDBJ databases">
        <title>Complete sequence of chromosome 2 of Burkholderia sp. 383.</title>
        <authorList>
            <consortium name="US DOE Joint Genome Institute"/>
            <person name="Copeland A."/>
            <person name="Lucas S."/>
            <person name="Lapidus A."/>
            <person name="Barry K."/>
            <person name="Detter J.C."/>
            <person name="Glavina T."/>
            <person name="Hammon N."/>
            <person name="Israni S."/>
            <person name="Pitluck S."/>
            <person name="Chain P."/>
            <person name="Malfatti S."/>
            <person name="Shin M."/>
            <person name="Vergez L."/>
            <person name="Schmutz J."/>
            <person name="Larimer F."/>
            <person name="Land M."/>
            <person name="Kyrpides N."/>
            <person name="Lykidis A."/>
            <person name="Richardson P."/>
        </authorList>
    </citation>
    <scope>NUCLEOTIDE SEQUENCE [LARGE SCALE GENOMIC DNA]</scope>
    <source>
        <strain>ATCC 17760 / DSM 23089 / LMG 22485 / NCIMB 9086 / R18194 / 383</strain>
    </source>
</reference>
<gene>
    <name type="ordered locus">Bcep18194_B0624</name>
</gene>
<protein>
    <recommendedName>
        <fullName evidence="1">Putative ribose/galactose/methyl galactoside import ATP-binding protein 1</fullName>
        <ecNumber evidence="1">7.5.2.11</ecNumber>
        <ecNumber evidence="1">7.5.2.7</ecNumber>
    </recommendedName>
</protein>
<comment type="function">
    <text evidence="1">Part of an ABC transporter complex involved in carbohydrate import. Could be involved in ribose, galactose and/or methyl galactoside import. Responsible for energy coupling to the transport system.</text>
</comment>
<comment type="catalytic activity">
    <reaction evidence="1">
        <text>D-ribose(out) + ATP + H2O = D-ribose(in) + ADP + phosphate + H(+)</text>
        <dbReference type="Rhea" id="RHEA:29903"/>
        <dbReference type="ChEBI" id="CHEBI:15377"/>
        <dbReference type="ChEBI" id="CHEBI:15378"/>
        <dbReference type="ChEBI" id="CHEBI:30616"/>
        <dbReference type="ChEBI" id="CHEBI:43474"/>
        <dbReference type="ChEBI" id="CHEBI:47013"/>
        <dbReference type="ChEBI" id="CHEBI:456216"/>
        <dbReference type="EC" id="7.5.2.7"/>
    </reaction>
</comment>
<comment type="catalytic activity">
    <reaction evidence="1">
        <text>D-galactose(out) + ATP + H2O = D-galactose(in) + ADP + phosphate + H(+)</text>
        <dbReference type="Rhea" id="RHEA:60156"/>
        <dbReference type="ChEBI" id="CHEBI:4139"/>
        <dbReference type="ChEBI" id="CHEBI:15377"/>
        <dbReference type="ChEBI" id="CHEBI:15378"/>
        <dbReference type="ChEBI" id="CHEBI:30616"/>
        <dbReference type="ChEBI" id="CHEBI:43474"/>
        <dbReference type="ChEBI" id="CHEBI:456216"/>
        <dbReference type="EC" id="7.5.2.11"/>
    </reaction>
</comment>
<comment type="subcellular location">
    <subcellularLocation>
        <location evidence="1">Cell inner membrane</location>
        <topology evidence="1">Peripheral membrane protein</topology>
    </subcellularLocation>
</comment>
<comment type="similarity">
    <text evidence="1">Belongs to the ABC transporter superfamily. Carbohydrate importer 2 (CUT2) (TC 3.A.1.2) family.</text>
</comment>
<accession>Q399X3</accession>
<name>RGMG1_BURL3</name>
<proteinExistence type="inferred from homology"/>
<keyword id="KW-0067">ATP-binding</keyword>
<keyword id="KW-0997">Cell inner membrane</keyword>
<keyword id="KW-1003">Cell membrane</keyword>
<keyword id="KW-0472">Membrane</keyword>
<keyword id="KW-0547">Nucleotide-binding</keyword>
<keyword id="KW-0677">Repeat</keyword>
<keyword id="KW-0762">Sugar transport</keyword>
<keyword id="KW-1278">Translocase</keyword>
<keyword id="KW-0813">Transport</keyword>